<proteinExistence type="inferred from homology"/>
<organism>
    <name type="scientific">Stylophora pistillata</name>
    <name type="common">Smooth cauliflower coral</name>
    <dbReference type="NCBI Taxonomy" id="50429"/>
    <lineage>
        <taxon>Eukaryota</taxon>
        <taxon>Metazoa</taxon>
        <taxon>Cnidaria</taxon>
        <taxon>Anthozoa</taxon>
        <taxon>Hexacorallia</taxon>
        <taxon>Scleractinia</taxon>
        <taxon>Astrocoeniina</taxon>
        <taxon>Pocilloporidae</taxon>
        <taxon>Stylophora</taxon>
    </lineage>
</organism>
<reference key="1">
    <citation type="journal article" date="2017" name="Sci. Rep.">
        <title>Comparative analysis of the genomes of Stylophora pistillata and Acropora digitifera provides evidence for extensive differences between species of corals.</title>
        <authorList>
            <person name="Voolstra C.R."/>
            <person name="Li Y."/>
            <person name="Liew Y.J."/>
            <person name="Baumgarten S."/>
            <person name="Zoccola D."/>
            <person name="Flot J.F."/>
            <person name="Tambutte S."/>
            <person name="Allemand D."/>
            <person name="Aranda M."/>
        </authorList>
    </citation>
    <scope>NUCLEOTIDE SEQUENCE [LARGE SCALE GENOMIC DNA]</scope>
</reference>
<reference key="2">
    <citation type="journal article" date="2023" name="Cell">
        <title>cGLRs are a diverse family of pattern recognition receptors in innate immunity.</title>
        <authorList>
            <person name="Li Y."/>
            <person name="Slavik K.M."/>
            <person name="Toyoda H.C."/>
            <person name="Morehouse B.R."/>
            <person name="de Oliveira Mann C.C."/>
            <person name="Elek A."/>
            <person name="Levy S."/>
            <person name="Wang Z."/>
            <person name="Mears K.S."/>
            <person name="Liu J."/>
            <person name="Kashin D."/>
            <person name="Guo X."/>
            <person name="Mass T."/>
            <person name="Sebe-Pedros A."/>
            <person name="Schwede F."/>
            <person name="Kranzusch P.J."/>
        </authorList>
    </citation>
    <scope>FUNCTION</scope>
</reference>
<keyword id="KW-0391">Immunity</keyword>
<keyword id="KW-0399">Innate immunity</keyword>
<keyword id="KW-0547">Nucleotide-binding</keyword>
<keyword id="KW-1185">Reference proteome</keyword>
<name>STNG5_STYPI</name>
<comment type="function">
    <text evidence="2 4">Facilitator of innate immune signaling that acts as a sensor of second messenger signals produced by cyclic GMP-AMP synthase-like receptors (cGLRs) and promotes the production of type I interferon (PubMed:37379839). Innate immune response is triggered in response to nucleotides from viruses and bacteria delivered to the cytoplasm (PubMed:37379839). Acts by binding cyclic dinucleotides: recognizes and binds 2'-3' linked cGAMP (2'-3'-cGAMP), a second messengers produced by cGLRs in response to nucleotides in the cytosol, such as double-stranded RNA (dsRNA) (PubMed:37379839). Upon binding to 2'-3'-cGAMP, oligomerizes and promotes the recruitment and subsequent activation of the transcription factor IRF3 to induce expression of type I interferon (By similarity).</text>
</comment>
<comment type="similarity">
    <text evidence="6">Belongs to the STING family.</text>
</comment>
<evidence type="ECO:0000250" key="1">
    <source>
        <dbReference type="UniProtKB" id="A0A2B4SJD2"/>
    </source>
</evidence>
<evidence type="ECO:0000250" key="2">
    <source>
        <dbReference type="UniProtKB" id="Q86WV6"/>
    </source>
</evidence>
<evidence type="ECO:0000256" key="3">
    <source>
        <dbReference type="SAM" id="MobiDB-lite"/>
    </source>
</evidence>
<evidence type="ECO:0000269" key="4">
    <source>
    </source>
</evidence>
<evidence type="ECO:0000303" key="5">
    <source>
    </source>
</evidence>
<evidence type="ECO:0000305" key="6"/>
<evidence type="ECO:0000312" key="7">
    <source>
        <dbReference type="EMBL" id="PFX29190.1"/>
    </source>
</evidence>
<accession>A0A2B4SJZ1</accession>
<gene>
    <name evidence="5" type="primary">STING5</name>
    <name evidence="7" type="ORF">AWC38_SpisGene6021</name>
</gene>
<feature type="chain" id="PRO_0000460010" description="Stimulator of interferon genes protein 5">
    <location>
        <begin position="1"/>
        <end position="306"/>
    </location>
</feature>
<feature type="region of interest" description="Disordered" evidence="3">
    <location>
        <begin position="1"/>
        <end position="50"/>
    </location>
</feature>
<feature type="binding site" evidence="1">
    <location>
        <position position="119"/>
    </location>
    <ligand>
        <name>2',3'-cGAMP</name>
        <dbReference type="ChEBI" id="CHEBI:143093"/>
    </ligand>
</feature>
<feature type="binding site" evidence="1">
    <location>
        <position position="180"/>
    </location>
    <ligand>
        <name>2',3'-cGAMP</name>
        <dbReference type="ChEBI" id="CHEBI:143093"/>
    </ligand>
</feature>
<feature type="binding site" evidence="1">
    <location>
        <position position="186"/>
    </location>
    <ligand>
        <name>2',3'-cGAMP</name>
        <dbReference type="ChEBI" id="CHEBI:143093"/>
    </ligand>
</feature>
<sequence length="306" mass="35041">MMSNDSQSEKRTAKWTGSGTPIAEGEESSSPSAHQTRQKATAADDDDDQQITDLEQELAELDLEEQRKAKKKRIASLQRQIEEKRNKLATVEISDLNEKENKNVVNVADGLAWSYYSGYLKLVLPRLEQRISESEKFRHKITDKKLYILLPKSCFTCDDIEHADSRVKWAGNLPESKINRGGIKERSYKHAVHEIVMPPFPDGTGEKYHFIVEYATPLMTLYDMSKFADAQLTDPERDHQVLLFMQKLTELLEKSKDCKGQYDCRGKYELVSFDEEEDKIADILIARHNNANKVGEESEELSIPVQ</sequence>
<protein>
    <recommendedName>
        <fullName evidence="6">Stimulator of interferon genes protein 5</fullName>
        <shortName evidence="5">Sp-STING5</shortName>
    </recommendedName>
</protein>
<dbReference type="EMBL" id="LSMT01000069">
    <property type="protein sequence ID" value="PFX29190.1"/>
    <property type="molecule type" value="Genomic_DNA"/>
</dbReference>
<dbReference type="SMR" id="A0A2B4SJZ1"/>
<dbReference type="STRING" id="50429.A0A2B4SJZ1"/>
<dbReference type="EnsemblMetazoa" id="XM_022928905.1">
    <property type="protein sequence ID" value="XP_022784640.1"/>
    <property type="gene ID" value="LOC111325163"/>
</dbReference>
<dbReference type="OrthoDB" id="6053839at2759"/>
<dbReference type="Proteomes" id="UP000225706">
    <property type="component" value="Unassembled WGS sequence"/>
</dbReference>
<dbReference type="GO" id="GO:0005776">
    <property type="term" value="C:autophagosome"/>
    <property type="evidence" value="ECO:0007669"/>
    <property type="project" value="TreeGrafter"/>
</dbReference>
<dbReference type="GO" id="GO:0005789">
    <property type="term" value="C:endoplasmic reticulum membrane"/>
    <property type="evidence" value="ECO:0007669"/>
    <property type="project" value="TreeGrafter"/>
</dbReference>
<dbReference type="GO" id="GO:0061507">
    <property type="term" value="F:2',3'-cyclic GMP-AMP binding"/>
    <property type="evidence" value="ECO:0000314"/>
    <property type="project" value="UniProtKB"/>
</dbReference>
<dbReference type="GO" id="GO:0035438">
    <property type="term" value="F:cyclic-di-GMP binding"/>
    <property type="evidence" value="ECO:0007669"/>
    <property type="project" value="TreeGrafter"/>
</dbReference>
<dbReference type="GO" id="GO:0002218">
    <property type="term" value="P:activation of innate immune response"/>
    <property type="evidence" value="ECO:0007669"/>
    <property type="project" value="InterPro"/>
</dbReference>
<dbReference type="GO" id="GO:0000045">
    <property type="term" value="P:autophagosome assembly"/>
    <property type="evidence" value="ECO:0007669"/>
    <property type="project" value="TreeGrafter"/>
</dbReference>
<dbReference type="GO" id="GO:0045087">
    <property type="term" value="P:innate immune response"/>
    <property type="evidence" value="ECO:0007669"/>
    <property type="project" value="UniProtKB-KW"/>
</dbReference>
<dbReference type="GO" id="GO:0016239">
    <property type="term" value="P:positive regulation of macroautophagy"/>
    <property type="evidence" value="ECO:0007669"/>
    <property type="project" value="TreeGrafter"/>
</dbReference>
<dbReference type="GO" id="GO:0032481">
    <property type="term" value="P:positive regulation of type I interferon production"/>
    <property type="evidence" value="ECO:0007669"/>
    <property type="project" value="InterPro"/>
</dbReference>
<dbReference type="GO" id="GO:0061709">
    <property type="term" value="P:reticulophagy"/>
    <property type="evidence" value="ECO:0007669"/>
    <property type="project" value="TreeGrafter"/>
</dbReference>
<dbReference type="FunFam" id="1.20.5.5200:FF:000001">
    <property type="entry name" value="Stimulator of interferon genes protein"/>
    <property type="match status" value="1"/>
</dbReference>
<dbReference type="Gene3D" id="1.20.5.5200">
    <property type="match status" value="1"/>
</dbReference>
<dbReference type="Gene3D" id="3.40.50.12100">
    <property type="entry name" value="Stimulator of interferon genes protein"/>
    <property type="match status" value="1"/>
</dbReference>
<dbReference type="InterPro" id="IPR029158">
    <property type="entry name" value="STING"/>
</dbReference>
<dbReference type="InterPro" id="IPR038623">
    <property type="entry name" value="STING_C_sf"/>
</dbReference>
<dbReference type="InterPro" id="IPR055432">
    <property type="entry name" value="STING_LBD"/>
</dbReference>
<dbReference type="PANTHER" id="PTHR34339">
    <property type="entry name" value="STIMULATOR OF INTERFERON GENES PROTEIN"/>
    <property type="match status" value="1"/>
</dbReference>
<dbReference type="PANTHER" id="PTHR34339:SF1">
    <property type="entry name" value="STIMULATOR OF INTERFERON GENES PROTEIN"/>
    <property type="match status" value="1"/>
</dbReference>
<dbReference type="Pfam" id="PF15009">
    <property type="entry name" value="STING_LBD"/>
    <property type="match status" value="1"/>
</dbReference>